<accession>B1B5D4</accession>
<gene>
    <name type="primary">AFP-B1</name>
</gene>
<feature type="chain" id="PRO_0000369633" description="Ninja-family protein 2">
    <location>
        <begin position="1"/>
        <end position="316"/>
    </location>
</feature>
<feature type="region of interest" description="Disordered" evidence="1">
    <location>
        <begin position="1"/>
        <end position="29"/>
    </location>
</feature>
<feature type="region of interest" description="Disordered" evidence="1">
    <location>
        <begin position="72"/>
        <end position="236"/>
    </location>
</feature>
<feature type="compositionally biased region" description="Basic and acidic residues" evidence="1">
    <location>
        <begin position="99"/>
        <end position="108"/>
    </location>
</feature>
<feature type="compositionally biased region" description="Polar residues" evidence="1">
    <location>
        <begin position="156"/>
        <end position="166"/>
    </location>
</feature>
<feature type="compositionally biased region" description="Low complexity" evidence="1">
    <location>
        <begin position="179"/>
        <end position="199"/>
    </location>
</feature>
<feature type="compositionally biased region" description="Low complexity" evidence="1">
    <location>
        <begin position="222"/>
        <end position="235"/>
    </location>
</feature>
<keyword id="KW-0539">Nucleus</keyword>
<keyword id="KW-1185">Reference proteome</keyword>
<evidence type="ECO:0000256" key="1">
    <source>
        <dbReference type="SAM" id="MobiDB-lite"/>
    </source>
</evidence>
<evidence type="ECO:0000305" key="2"/>
<organism>
    <name type="scientific">Triticum aestivum</name>
    <name type="common">Wheat</name>
    <dbReference type="NCBI Taxonomy" id="4565"/>
    <lineage>
        <taxon>Eukaryota</taxon>
        <taxon>Viridiplantae</taxon>
        <taxon>Streptophyta</taxon>
        <taxon>Embryophyta</taxon>
        <taxon>Tracheophyta</taxon>
        <taxon>Spermatophyta</taxon>
        <taxon>Magnoliopsida</taxon>
        <taxon>Liliopsida</taxon>
        <taxon>Poales</taxon>
        <taxon>Poaceae</taxon>
        <taxon>BOP clade</taxon>
        <taxon>Pooideae</taxon>
        <taxon>Triticodae</taxon>
        <taxon>Triticeae</taxon>
        <taxon>Triticinae</taxon>
        <taxon>Triticum</taxon>
    </lineage>
</organism>
<protein>
    <recommendedName>
        <fullName>Ninja-family protein 2</fullName>
    </recommendedName>
    <alternativeName>
        <fullName>ABI five-binding protein B1</fullName>
        <shortName>ABI5-binding protein B1</shortName>
        <shortName>TaAFP-B1</shortName>
    </alternativeName>
</protein>
<sequence>MASRDFLGRFGGEKGSSSDKAGGGAGEPDEVVELSLGLSLGGCFGANSGRDAKKPRLVRSSSLAAMYSLPGTSDDLAAATPPPAPLMRTSSLPTETEEERWRRREMQSLKRLQAKRKRLERRTSMNSGKSGGSSSRDDAQEPLYPSAFQLRRSVVDQGNTSSSMPEQGSADGAEAKSTSSMEISSDNNNNNNASNQNKSLPPPAPSPAGKLPNGIVKEQPPLRTLRSLTMRTTSTGDLRKSMMEDMPMVSSKVDGPNGKKIDGFLYKYRKGEEVRIVCVCHGNFLTPAEFVKHAGGGDVTNPLRHIVVNPAPSVFL</sequence>
<comment type="subcellular location">
    <subcellularLocation>
        <location>Nucleus</location>
    </subcellularLocation>
</comment>
<comment type="similarity">
    <text evidence="2">Belongs to the Ninja family.</text>
</comment>
<reference key="1">
    <citation type="submission" date="2007-09" db="EMBL/GenBank/DDBJ databases">
        <title>Isolation and location of three homologous ABI5-binding protein genes of wheat.</title>
        <authorList>
            <person name="Ohnishi N."/>
            <person name="Noda K."/>
        </authorList>
    </citation>
    <scope>NUCLEOTIDE SEQUENCE [GENOMIC DNA]</scope>
    <source>
        <strain>cv. Chinese Spring</strain>
    </source>
</reference>
<proteinExistence type="inferred from homology"/>
<dbReference type="EMBL" id="AB360912">
    <property type="protein sequence ID" value="BAG12828.1"/>
    <property type="molecule type" value="Genomic_DNA"/>
</dbReference>
<dbReference type="EnsemblPlants" id="TraesCS2B02G202700.2">
    <property type="protein sequence ID" value="TraesCS2B02G202700.2"/>
    <property type="gene ID" value="TraesCS2B02G202700"/>
</dbReference>
<dbReference type="EnsemblPlants" id="TraesCS2B03G0489100.2">
    <property type="protein sequence ID" value="TraesCS2B03G0489100.2.CDS"/>
    <property type="gene ID" value="TraesCS2B03G0489100"/>
</dbReference>
<dbReference type="EnsemblPlants" id="TraesKAR2B01G0137000.1">
    <property type="protein sequence ID" value="cds.TraesKAR2B01G0137000.1"/>
    <property type="gene ID" value="TraesKAR2B01G0137000"/>
</dbReference>
<dbReference type="EnsemblPlants" id="TraesLAC2B03G00884530.1">
    <property type="protein sequence ID" value="TraesLAC2B03G00884530.1"/>
    <property type="gene ID" value="TraesLAC2B03G00884530"/>
</dbReference>
<dbReference type="Gramene" id="TraesCS2B02G202700.2">
    <property type="protein sequence ID" value="TraesCS2B02G202700.2"/>
    <property type="gene ID" value="TraesCS2B02G202700"/>
</dbReference>
<dbReference type="Gramene" id="TraesCS2B03G0489100.2">
    <property type="protein sequence ID" value="TraesCS2B03G0489100.2.CDS"/>
    <property type="gene ID" value="TraesCS2B03G0489100"/>
</dbReference>
<dbReference type="Gramene" id="TraesKAR2B01G0137000.1">
    <property type="protein sequence ID" value="cds.TraesKAR2B01G0137000.1"/>
    <property type="gene ID" value="TraesKAR2B01G0137000"/>
</dbReference>
<dbReference type="Gramene" id="TraesLAC2B03G00884530.1">
    <property type="protein sequence ID" value="TraesLAC2B03G00884530.1"/>
    <property type="gene ID" value="TraesLAC2B03G00884530"/>
</dbReference>
<dbReference type="OMA" id="MNKFPRD"/>
<dbReference type="Proteomes" id="UP000019116">
    <property type="component" value="Chromosome 2B"/>
</dbReference>
<dbReference type="ExpressionAtlas" id="B1B5D4">
    <property type="expression patterns" value="baseline and differential"/>
</dbReference>
<dbReference type="GO" id="GO:0005634">
    <property type="term" value="C:nucleus"/>
    <property type="evidence" value="ECO:0000318"/>
    <property type="project" value="GO_Central"/>
</dbReference>
<dbReference type="GO" id="GO:0045892">
    <property type="term" value="P:negative regulation of DNA-templated transcription"/>
    <property type="evidence" value="ECO:0000318"/>
    <property type="project" value="GO_Central"/>
</dbReference>
<dbReference type="GO" id="GO:0007165">
    <property type="term" value="P:signal transduction"/>
    <property type="evidence" value="ECO:0007669"/>
    <property type="project" value="InterPro"/>
</dbReference>
<dbReference type="InterPro" id="IPR031307">
    <property type="entry name" value="Ninja_fam"/>
</dbReference>
<dbReference type="InterPro" id="IPR012463">
    <property type="entry name" value="Ninja_motif"/>
</dbReference>
<dbReference type="InterPro" id="IPR032310">
    <property type="entry name" value="NLS_NINJA_AFP-like"/>
</dbReference>
<dbReference type="InterPro" id="IPR032308">
    <property type="entry name" value="TDBD"/>
</dbReference>
<dbReference type="PANTHER" id="PTHR31413">
    <property type="entry name" value="AFP HOMOLOG 2"/>
    <property type="match status" value="1"/>
</dbReference>
<dbReference type="PANTHER" id="PTHR31413:SF31">
    <property type="entry name" value="NINJA-FAMILY PROTEIN AFP3"/>
    <property type="match status" value="1"/>
</dbReference>
<dbReference type="Pfam" id="PF07897">
    <property type="entry name" value="EAR"/>
    <property type="match status" value="1"/>
</dbReference>
<dbReference type="Pfam" id="PF16136">
    <property type="entry name" value="NLS_NINJA_AFP"/>
    <property type="match status" value="1"/>
</dbReference>
<dbReference type="Pfam" id="PF16135">
    <property type="entry name" value="TDBD"/>
    <property type="match status" value="1"/>
</dbReference>
<name>NNJA2_WHEAT</name>